<proteinExistence type="inferred from homology"/>
<comment type="function">
    <text evidence="1">Catalyzes the condensation of iminoaspartate with dihydroxyacetone phosphate to form quinolinate.</text>
</comment>
<comment type="catalytic activity">
    <reaction evidence="1">
        <text>iminosuccinate + dihydroxyacetone phosphate = quinolinate + phosphate + 2 H2O + H(+)</text>
        <dbReference type="Rhea" id="RHEA:25888"/>
        <dbReference type="ChEBI" id="CHEBI:15377"/>
        <dbReference type="ChEBI" id="CHEBI:15378"/>
        <dbReference type="ChEBI" id="CHEBI:29959"/>
        <dbReference type="ChEBI" id="CHEBI:43474"/>
        <dbReference type="ChEBI" id="CHEBI:57642"/>
        <dbReference type="ChEBI" id="CHEBI:77875"/>
        <dbReference type="EC" id="2.5.1.72"/>
    </reaction>
    <physiologicalReaction direction="left-to-right" evidence="1">
        <dbReference type="Rhea" id="RHEA:25889"/>
    </physiologicalReaction>
</comment>
<comment type="cofactor">
    <cofactor evidence="1">
        <name>[4Fe-4S] cluster</name>
        <dbReference type="ChEBI" id="CHEBI:49883"/>
    </cofactor>
    <text evidence="1">Binds 1 [4Fe-4S] cluster per subunit.</text>
</comment>
<comment type="pathway">
    <text evidence="1">Cofactor biosynthesis; NAD(+) biosynthesis; quinolinate from iminoaspartate: step 1/1.</text>
</comment>
<comment type="subcellular location">
    <subcellularLocation>
        <location evidence="1">Cytoplasm</location>
    </subcellularLocation>
</comment>
<comment type="similarity">
    <text evidence="1">Belongs to the quinolinate synthase family. Type 2 subfamily.</text>
</comment>
<name>NADA_SINMW</name>
<organism>
    <name type="scientific">Sinorhizobium medicae (strain WSM419)</name>
    <name type="common">Ensifer medicae</name>
    <dbReference type="NCBI Taxonomy" id="366394"/>
    <lineage>
        <taxon>Bacteria</taxon>
        <taxon>Pseudomonadati</taxon>
        <taxon>Pseudomonadota</taxon>
        <taxon>Alphaproteobacteria</taxon>
        <taxon>Hyphomicrobiales</taxon>
        <taxon>Rhizobiaceae</taxon>
        <taxon>Sinorhizobium/Ensifer group</taxon>
        <taxon>Sinorhizobium</taxon>
    </lineage>
</organism>
<dbReference type="EC" id="2.5.1.72" evidence="1"/>
<dbReference type="EMBL" id="CP000738">
    <property type="protein sequence ID" value="ABR59555.1"/>
    <property type="molecule type" value="Genomic_DNA"/>
</dbReference>
<dbReference type="RefSeq" id="WP_011974901.1">
    <property type="nucleotide sequence ID" value="NC_009636.1"/>
</dbReference>
<dbReference type="RefSeq" id="YP_001326390.1">
    <property type="nucleotide sequence ID" value="NC_009636.1"/>
</dbReference>
<dbReference type="SMR" id="A6U7C5"/>
<dbReference type="STRING" id="366394.Smed_0699"/>
<dbReference type="GeneID" id="61609975"/>
<dbReference type="KEGG" id="smd:Smed_0699"/>
<dbReference type="PATRIC" id="fig|366394.8.peg.3803"/>
<dbReference type="eggNOG" id="COG0379">
    <property type="taxonomic scope" value="Bacteria"/>
</dbReference>
<dbReference type="HOGENOM" id="CLU_047382_0_0_5"/>
<dbReference type="OrthoDB" id="9801204at2"/>
<dbReference type="UniPathway" id="UPA00253">
    <property type="reaction ID" value="UER00327"/>
</dbReference>
<dbReference type="Proteomes" id="UP000001108">
    <property type="component" value="Chromosome"/>
</dbReference>
<dbReference type="GO" id="GO:0005829">
    <property type="term" value="C:cytosol"/>
    <property type="evidence" value="ECO:0007669"/>
    <property type="project" value="TreeGrafter"/>
</dbReference>
<dbReference type="GO" id="GO:0051539">
    <property type="term" value="F:4 iron, 4 sulfur cluster binding"/>
    <property type="evidence" value="ECO:0007669"/>
    <property type="project" value="UniProtKB-KW"/>
</dbReference>
<dbReference type="GO" id="GO:0046872">
    <property type="term" value="F:metal ion binding"/>
    <property type="evidence" value="ECO:0007669"/>
    <property type="project" value="UniProtKB-KW"/>
</dbReference>
<dbReference type="GO" id="GO:0008987">
    <property type="term" value="F:quinolinate synthetase A activity"/>
    <property type="evidence" value="ECO:0007669"/>
    <property type="project" value="UniProtKB-UniRule"/>
</dbReference>
<dbReference type="GO" id="GO:0034628">
    <property type="term" value="P:'de novo' NAD biosynthetic process from L-aspartate"/>
    <property type="evidence" value="ECO:0007669"/>
    <property type="project" value="TreeGrafter"/>
</dbReference>
<dbReference type="Gene3D" id="3.40.50.10800">
    <property type="entry name" value="NadA-like"/>
    <property type="match status" value="3"/>
</dbReference>
<dbReference type="HAMAP" id="MF_00568">
    <property type="entry name" value="NadA_type2"/>
    <property type="match status" value="1"/>
</dbReference>
<dbReference type="InterPro" id="IPR003473">
    <property type="entry name" value="NadA"/>
</dbReference>
<dbReference type="InterPro" id="IPR036094">
    <property type="entry name" value="NadA_sf"/>
</dbReference>
<dbReference type="InterPro" id="IPR023066">
    <property type="entry name" value="Quinolinate_synth_type2"/>
</dbReference>
<dbReference type="NCBIfam" id="TIGR00550">
    <property type="entry name" value="nadA"/>
    <property type="match status" value="1"/>
</dbReference>
<dbReference type="NCBIfam" id="NF006878">
    <property type="entry name" value="PRK09375.1-2"/>
    <property type="match status" value="1"/>
</dbReference>
<dbReference type="NCBIfam" id="NF006879">
    <property type="entry name" value="PRK09375.1-4"/>
    <property type="match status" value="1"/>
</dbReference>
<dbReference type="PANTHER" id="PTHR30573:SF0">
    <property type="entry name" value="QUINOLINATE SYNTHASE, CHLOROPLASTIC"/>
    <property type="match status" value="1"/>
</dbReference>
<dbReference type="PANTHER" id="PTHR30573">
    <property type="entry name" value="QUINOLINATE SYNTHETASE A"/>
    <property type="match status" value="1"/>
</dbReference>
<dbReference type="Pfam" id="PF02445">
    <property type="entry name" value="NadA"/>
    <property type="match status" value="1"/>
</dbReference>
<dbReference type="SUPFAM" id="SSF142754">
    <property type="entry name" value="NadA-like"/>
    <property type="match status" value="1"/>
</dbReference>
<protein>
    <recommendedName>
        <fullName evidence="1">Quinolinate synthase</fullName>
        <ecNumber evidence="1">2.5.1.72</ecNumber>
    </recommendedName>
</protein>
<sequence length="359" mass="39580">MTTLNLRKDAAPAPAFVSAAARFGVIEKPDLAFTPAVARETEHLYEKVKDFIPAFEWAAYAPYVHAINRLKKERNAVILAHNYQTPDIFHCVADIVGDSLQLARDATKVDAEIIIQCGVHFMAETSKLLNPEKTVLIPDARAGCSLSESITGADVRLLKERYPGVPVVTYVNTSADVKAETDICCTSSNVLAVVESLESDTVLCIPDEYLAMNVARETNKKILTWKGHCEVHERFTAAELLAYKEANPGIEIVGHPECHPDVIAVCDFSGSTSGMINYVKDKRPQRVLLVTECSMASNIQAEVKGVDFVKPCNLCPHMKRITLPKIFDSLLTMTEEVLVDPAIADRARLAVERMVNLKQ</sequence>
<accession>A6U7C5</accession>
<evidence type="ECO:0000255" key="1">
    <source>
        <dbReference type="HAMAP-Rule" id="MF_00568"/>
    </source>
</evidence>
<gene>
    <name evidence="1" type="primary">nadA</name>
    <name type="ordered locus">Smed_0699</name>
</gene>
<keyword id="KW-0004">4Fe-4S</keyword>
<keyword id="KW-0963">Cytoplasm</keyword>
<keyword id="KW-0408">Iron</keyword>
<keyword id="KW-0411">Iron-sulfur</keyword>
<keyword id="KW-0479">Metal-binding</keyword>
<keyword id="KW-0662">Pyridine nucleotide biosynthesis</keyword>
<keyword id="KW-0808">Transferase</keyword>
<reference key="1">
    <citation type="submission" date="2007-06" db="EMBL/GenBank/DDBJ databases">
        <title>Complete sequence of Sinorhizobium medicae WSM419 chromosome.</title>
        <authorList>
            <consortium name="US DOE Joint Genome Institute"/>
            <person name="Copeland A."/>
            <person name="Lucas S."/>
            <person name="Lapidus A."/>
            <person name="Barry K."/>
            <person name="Glavina del Rio T."/>
            <person name="Dalin E."/>
            <person name="Tice H."/>
            <person name="Pitluck S."/>
            <person name="Chain P."/>
            <person name="Malfatti S."/>
            <person name="Shin M."/>
            <person name="Vergez L."/>
            <person name="Schmutz J."/>
            <person name="Larimer F."/>
            <person name="Land M."/>
            <person name="Hauser L."/>
            <person name="Kyrpides N."/>
            <person name="Mikhailova N."/>
            <person name="Reeve W.G."/>
            <person name="Richardson P."/>
        </authorList>
    </citation>
    <scope>NUCLEOTIDE SEQUENCE [LARGE SCALE GENOMIC DNA]</scope>
    <source>
        <strain>WSM419</strain>
    </source>
</reference>
<feature type="chain" id="PRO_1000061163" description="Quinolinate synthase">
    <location>
        <begin position="1"/>
        <end position="359"/>
    </location>
</feature>
<feature type="binding site" evidence="1">
    <location>
        <position position="81"/>
    </location>
    <ligand>
        <name>iminosuccinate</name>
        <dbReference type="ChEBI" id="CHEBI:77875"/>
    </ligand>
</feature>
<feature type="binding site" evidence="1">
    <location>
        <position position="99"/>
    </location>
    <ligand>
        <name>iminosuccinate</name>
        <dbReference type="ChEBI" id="CHEBI:77875"/>
    </ligand>
</feature>
<feature type="binding site" evidence="1">
    <location>
        <position position="144"/>
    </location>
    <ligand>
        <name>[4Fe-4S] cluster</name>
        <dbReference type="ChEBI" id="CHEBI:49883"/>
    </ligand>
</feature>
<feature type="binding site" evidence="1">
    <location>
        <begin position="170"/>
        <end position="172"/>
    </location>
    <ligand>
        <name>iminosuccinate</name>
        <dbReference type="ChEBI" id="CHEBI:77875"/>
    </ligand>
</feature>
<feature type="binding site" evidence="1">
    <location>
        <position position="187"/>
    </location>
    <ligand>
        <name>iminosuccinate</name>
        <dbReference type="ChEBI" id="CHEBI:77875"/>
    </ligand>
</feature>
<feature type="binding site" evidence="1">
    <location>
        <position position="229"/>
    </location>
    <ligand>
        <name>[4Fe-4S] cluster</name>
        <dbReference type="ChEBI" id="CHEBI:49883"/>
    </ligand>
</feature>
<feature type="binding site" evidence="1">
    <location>
        <begin position="255"/>
        <end position="257"/>
    </location>
    <ligand>
        <name>iminosuccinate</name>
        <dbReference type="ChEBI" id="CHEBI:77875"/>
    </ligand>
</feature>
<feature type="binding site" evidence="1">
    <location>
        <position position="272"/>
    </location>
    <ligand>
        <name>iminosuccinate</name>
        <dbReference type="ChEBI" id="CHEBI:77875"/>
    </ligand>
</feature>
<feature type="binding site" evidence="1">
    <location>
        <position position="315"/>
    </location>
    <ligand>
        <name>[4Fe-4S] cluster</name>
        <dbReference type="ChEBI" id="CHEBI:49883"/>
    </ligand>
</feature>